<proteinExistence type="inferred from homology"/>
<gene>
    <name evidence="1" type="primary">obg</name>
    <name type="ordered locus">SE_1327</name>
</gene>
<protein>
    <recommendedName>
        <fullName evidence="1">GTPase Obg</fullName>
        <ecNumber evidence="1">3.6.5.-</ecNumber>
    </recommendedName>
    <alternativeName>
        <fullName evidence="1">GTP-binding protein Obg</fullName>
    </alternativeName>
</protein>
<reference key="1">
    <citation type="journal article" date="2003" name="Mol. Microbiol.">
        <title>Genome-based analysis of virulence genes in a non-biofilm-forming Staphylococcus epidermidis strain (ATCC 12228).</title>
        <authorList>
            <person name="Zhang Y.-Q."/>
            <person name="Ren S.-X."/>
            <person name="Li H.-L."/>
            <person name="Wang Y.-X."/>
            <person name="Fu G."/>
            <person name="Yang J."/>
            <person name="Qin Z.-Q."/>
            <person name="Miao Y.-G."/>
            <person name="Wang W.-Y."/>
            <person name="Chen R.-S."/>
            <person name="Shen Y."/>
            <person name="Chen Z."/>
            <person name="Yuan Z.-H."/>
            <person name="Zhao G.-P."/>
            <person name="Qu D."/>
            <person name="Danchin A."/>
            <person name="Wen Y.-M."/>
        </authorList>
    </citation>
    <scope>NUCLEOTIDE SEQUENCE [LARGE SCALE GENOMIC DNA]</scope>
    <source>
        <strain>ATCC 12228 / FDA PCI 1200</strain>
    </source>
</reference>
<feature type="chain" id="PRO_0000386283" description="GTPase Obg">
    <location>
        <begin position="1"/>
        <end position="430"/>
    </location>
</feature>
<feature type="domain" description="Obg" evidence="3">
    <location>
        <begin position="1"/>
        <end position="158"/>
    </location>
</feature>
<feature type="domain" description="OBG-type G" evidence="1">
    <location>
        <begin position="159"/>
        <end position="329"/>
    </location>
</feature>
<feature type="domain" description="OCT" evidence="2">
    <location>
        <begin position="352"/>
        <end position="430"/>
    </location>
</feature>
<feature type="region of interest" description="Disordered" evidence="4">
    <location>
        <begin position="118"/>
        <end position="145"/>
    </location>
</feature>
<feature type="binding site" evidence="1">
    <location>
        <begin position="165"/>
        <end position="172"/>
    </location>
    <ligand>
        <name>GTP</name>
        <dbReference type="ChEBI" id="CHEBI:37565"/>
    </ligand>
</feature>
<feature type="binding site" evidence="1">
    <location>
        <position position="172"/>
    </location>
    <ligand>
        <name>Mg(2+)</name>
        <dbReference type="ChEBI" id="CHEBI:18420"/>
    </ligand>
</feature>
<feature type="binding site" evidence="1">
    <location>
        <begin position="190"/>
        <end position="194"/>
    </location>
    <ligand>
        <name>GTP</name>
        <dbReference type="ChEBI" id="CHEBI:37565"/>
    </ligand>
</feature>
<feature type="binding site" evidence="1">
    <location>
        <position position="192"/>
    </location>
    <ligand>
        <name>Mg(2+)</name>
        <dbReference type="ChEBI" id="CHEBI:18420"/>
    </ligand>
</feature>
<feature type="binding site" evidence="1">
    <location>
        <begin position="212"/>
        <end position="215"/>
    </location>
    <ligand>
        <name>GTP</name>
        <dbReference type="ChEBI" id="CHEBI:37565"/>
    </ligand>
</feature>
<feature type="binding site" evidence="1">
    <location>
        <begin position="282"/>
        <end position="285"/>
    </location>
    <ligand>
        <name>GTP</name>
        <dbReference type="ChEBI" id="CHEBI:37565"/>
    </ligand>
</feature>
<feature type="binding site" evidence="1">
    <location>
        <begin position="310"/>
        <end position="312"/>
    </location>
    <ligand>
        <name>GTP</name>
        <dbReference type="ChEBI" id="CHEBI:37565"/>
    </ligand>
</feature>
<organism>
    <name type="scientific">Staphylococcus epidermidis (strain ATCC 12228 / FDA PCI 1200)</name>
    <dbReference type="NCBI Taxonomy" id="176280"/>
    <lineage>
        <taxon>Bacteria</taxon>
        <taxon>Bacillati</taxon>
        <taxon>Bacillota</taxon>
        <taxon>Bacilli</taxon>
        <taxon>Bacillales</taxon>
        <taxon>Staphylococcaceae</taxon>
        <taxon>Staphylococcus</taxon>
    </lineage>
</organism>
<sequence>MFVDQVKISLKAGDGGNGITAYRREKYVPFGGPAGGDGGKGASVVFEVDEGLRTLLDFRYQRHFKAKKGENGQSSNMHGRNAEDLVLKVPPGTIIKSVESEEVLADLVEDGQRAIVARGGRGGRGNSRFATPRNPAPDFSENGEPGEELEVTLELKLLADVGLVGFPSVGKSTLLSIVSKAKPKIGAYHFTTIKPNLGVVSTPDHRSFVMADLPGLIEGASDGVGLGHQFLRHVERTKVIVHMIDMSGSEGRNPLDDYKIINQELINYKQRLEDRPQIIVANKMDLPDSQGNLSHFKEQLDNDVTVVPVSTITRDNIDQLLYQIADKLEEVKDVDFSVEEDENLGVNRVLYKHTPSADKFTISRDDDGAYVVSGNAIERMFKMTDFNSDPAVRRFARQMRSMGIDDALRERGCSNGDIVRILGGEFEFVE</sequence>
<comment type="function">
    <text evidence="1">An essential GTPase which binds GTP, GDP and possibly (p)ppGpp with moderate affinity, with high nucleotide exchange rates and a fairly low GTP hydrolysis rate. Plays a role in control of the cell cycle, stress response, ribosome biogenesis and in those bacteria that undergo differentiation, in morphogenesis control.</text>
</comment>
<comment type="cofactor">
    <cofactor evidence="1">
        <name>Mg(2+)</name>
        <dbReference type="ChEBI" id="CHEBI:18420"/>
    </cofactor>
</comment>
<comment type="subunit">
    <text evidence="1">Monomer.</text>
</comment>
<comment type="subcellular location">
    <subcellularLocation>
        <location evidence="1">Cytoplasm</location>
    </subcellularLocation>
</comment>
<comment type="similarity">
    <text evidence="1">Belongs to the TRAFAC class OBG-HflX-like GTPase superfamily. OBG GTPase family.</text>
</comment>
<dbReference type="EC" id="3.6.5.-" evidence="1"/>
<dbReference type="EMBL" id="AE015929">
    <property type="protein sequence ID" value="AAO04926.1"/>
    <property type="molecule type" value="Genomic_DNA"/>
</dbReference>
<dbReference type="RefSeq" id="NP_764882.1">
    <property type="nucleotide sequence ID" value="NC_004461.1"/>
</dbReference>
<dbReference type="SMR" id="Q8CNZ7"/>
<dbReference type="KEGG" id="sep:SE_1327"/>
<dbReference type="PATRIC" id="fig|176280.10.peg.1296"/>
<dbReference type="eggNOG" id="COG0536">
    <property type="taxonomic scope" value="Bacteria"/>
</dbReference>
<dbReference type="HOGENOM" id="CLU_011747_2_1_9"/>
<dbReference type="OrthoDB" id="9807318at2"/>
<dbReference type="Proteomes" id="UP000001411">
    <property type="component" value="Chromosome"/>
</dbReference>
<dbReference type="GO" id="GO:0005737">
    <property type="term" value="C:cytoplasm"/>
    <property type="evidence" value="ECO:0007669"/>
    <property type="project" value="UniProtKB-SubCell"/>
</dbReference>
<dbReference type="GO" id="GO:0005525">
    <property type="term" value="F:GTP binding"/>
    <property type="evidence" value="ECO:0007669"/>
    <property type="project" value="UniProtKB-UniRule"/>
</dbReference>
<dbReference type="GO" id="GO:0003924">
    <property type="term" value="F:GTPase activity"/>
    <property type="evidence" value="ECO:0007669"/>
    <property type="project" value="UniProtKB-UniRule"/>
</dbReference>
<dbReference type="GO" id="GO:0000287">
    <property type="term" value="F:magnesium ion binding"/>
    <property type="evidence" value="ECO:0007669"/>
    <property type="project" value="InterPro"/>
</dbReference>
<dbReference type="GO" id="GO:0042254">
    <property type="term" value="P:ribosome biogenesis"/>
    <property type="evidence" value="ECO:0007669"/>
    <property type="project" value="UniProtKB-UniRule"/>
</dbReference>
<dbReference type="CDD" id="cd01898">
    <property type="entry name" value="Obg"/>
    <property type="match status" value="1"/>
</dbReference>
<dbReference type="FunFam" id="2.70.210.12:FF:000001">
    <property type="entry name" value="GTPase Obg"/>
    <property type="match status" value="1"/>
</dbReference>
<dbReference type="Gene3D" id="3.30.300.350">
    <property type="entry name" value="GTP-binding protein OBG, C-terminal domain"/>
    <property type="match status" value="1"/>
</dbReference>
<dbReference type="Gene3D" id="2.70.210.12">
    <property type="entry name" value="GTP1/OBG domain"/>
    <property type="match status" value="1"/>
</dbReference>
<dbReference type="Gene3D" id="3.40.50.300">
    <property type="entry name" value="P-loop containing nucleotide triphosphate hydrolases"/>
    <property type="match status" value="1"/>
</dbReference>
<dbReference type="HAMAP" id="MF_01454">
    <property type="entry name" value="GTPase_Obg"/>
    <property type="match status" value="1"/>
</dbReference>
<dbReference type="InterPro" id="IPR031167">
    <property type="entry name" value="G_OBG"/>
</dbReference>
<dbReference type="InterPro" id="IPR006073">
    <property type="entry name" value="GTP-bd"/>
</dbReference>
<dbReference type="InterPro" id="IPR014100">
    <property type="entry name" value="GTP-bd_Obg/CgtA"/>
</dbReference>
<dbReference type="InterPro" id="IPR036346">
    <property type="entry name" value="GTP-bd_prot_GTP1/OBG_C_sf"/>
</dbReference>
<dbReference type="InterPro" id="IPR006074">
    <property type="entry name" value="GTP1-OBG_CS"/>
</dbReference>
<dbReference type="InterPro" id="IPR006169">
    <property type="entry name" value="GTP1_OBG_dom"/>
</dbReference>
<dbReference type="InterPro" id="IPR036726">
    <property type="entry name" value="GTP1_OBG_dom_sf"/>
</dbReference>
<dbReference type="InterPro" id="IPR045086">
    <property type="entry name" value="OBG_GTPase"/>
</dbReference>
<dbReference type="InterPro" id="IPR015349">
    <property type="entry name" value="OCT_dom"/>
</dbReference>
<dbReference type="InterPro" id="IPR027417">
    <property type="entry name" value="P-loop_NTPase"/>
</dbReference>
<dbReference type="NCBIfam" id="TIGR02729">
    <property type="entry name" value="Obg_CgtA"/>
    <property type="match status" value="1"/>
</dbReference>
<dbReference type="NCBIfam" id="TIGR03595">
    <property type="entry name" value="Obg_CgtA_exten"/>
    <property type="match status" value="1"/>
</dbReference>
<dbReference type="NCBIfam" id="NF008954">
    <property type="entry name" value="PRK12296.1"/>
    <property type="match status" value="1"/>
</dbReference>
<dbReference type="NCBIfam" id="NF008955">
    <property type="entry name" value="PRK12297.1"/>
    <property type="match status" value="1"/>
</dbReference>
<dbReference type="NCBIfam" id="NF008956">
    <property type="entry name" value="PRK12299.1"/>
    <property type="match status" value="1"/>
</dbReference>
<dbReference type="PANTHER" id="PTHR11702">
    <property type="entry name" value="DEVELOPMENTALLY REGULATED GTP-BINDING PROTEIN-RELATED"/>
    <property type="match status" value="1"/>
</dbReference>
<dbReference type="PANTHER" id="PTHR11702:SF31">
    <property type="entry name" value="MITOCHONDRIAL RIBOSOME-ASSOCIATED GTPASE 2"/>
    <property type="match status" value="1"/>
</dbReference>
<dbReference type="Pfam" id="PF09269">
    <property type="entry name" value="DUF1967"/>
    <property type="match status" value="1"/>
</dbReference>
<dbReference type="Pfam" id="PF01018">
    <property type="entry name" value="GTP1_OBG"/>
    <property type="match status" value="1"/>
</dbReference>
<dbReference type="Pfam" id="PF01926">
    <property type="entry name" value="MMR_HSR1"/>
    <property type="match status" value="1"/>
</dbReference>
<dbReference type="PRINTS" id="PR00326">
    <property type="entry name" value="GTP1OBG"/>
</dbReference>
<dbReference type="SUPFAM" id="SSF102741">
    <property type="entry name" value="Obg GTP-binding protein C-terminal domain"/>
    <property type="match status" value="1"/>
</dbReference>
<dbReference type="SUPFAM" id="SSF82051">
    <property type="entry name" value="Obg GTP-binding protein N-terminal domain"/>
    <property type="match status" value="1"/>
</dbReference>
<dbReference type="SUPFAM" id="SSF52540">
    <property type="entry name" value="P-loop containing nucleoside triphosphate hydrolases"/>
    <property type="match status" value="1"/>
</dbReference>
<dbReference type="PROSITE" id="PS51710">
    <property type="entry name" value="G_OBG"/>
    <property type="match status" value="1"/>
</dbReference>
<dbReference type="PROSITE" id="PS00905">
    <property type="entry name" value="GTP1_OBG"/>
    <property type="match status" value="1"/>
</dbReference>
<dbReference type="PROSITE" id="PS51883">
    <property type="entry name" value="OBG"/>
    <property type="match status" value="1"/>
</dbReference>
<dbReference type="PROSITE" id="PS51881">
    <property type="entry name" value="OCT"/>
    <property type="match status" value="1"/>
</dbReference>
<accession>Q8CNZ7</accession>
<keyword id="KW-0963">Cytoplasm</keyword>
<keyword id="KW-0342">GTP-binding</keyword>
<keyword id="KW-0378">Hydrolase</keyword>
<keyword id="KW-0460">Magnesium</keyword>
<keyword id="KW-0479">Metal-binding</keyword>
<keyword id="KW-0547">Nucleotide-binding</keyword>
<evidence type="ECO:0000255" key="1">
    <source>
        <dbReference type="HAMAP-Rule" id="MF_01454"/>
    </source>
</evidence>
<evidence type="ECO:0000255" key="2">
    <source>
        <dbReference type="PROSITE-ProRule" id="PRU01229"/>
    </source>
</evidence>
<evidence type="ECO:0000255" key="3">
    <source>
        <dbReference type="PROSITE-ProRule" id="PRU01231"/>
    </source>
</evidence>
<evidence type="ECO:0000256" key="4">
    <source>
        <dbReference type="SAM" id="MobiDB-lite"/>
    </source>
</evidence>
<name>OBG_STAES</name>